<gene>
    <name evidence="1" type="primary">nusG</name>
    <name type="ordered locus">SERP0177</name>
</gene>
<accession>Q5HRL6</accession>
<keyword id="KW-1185">Reference proteome</keyword>
<keyword id="KW-0804">Transcription</keyword>
<keyword id="KW-0889">Transcription antitermination</keyword>
<keyword id="KW-0805">Transcription regulation</keyword>
<keyword id="KW-0806">Transcription termination</keyword>
<comment type="function">
    <text evidence="1">Participates in transcription elongation, termination and antitermination.</text>
</comment>
<comment type="similarity">
    <text evidence="1">Belongs to the NusG family.</text>
</comment>
<protein>
    <recommendedName>
        <fullName evidence="1">Transcription termination/antitermination protein NusG</fullName>
    </recommendedName>
</protein>
<reference key="1">
    <citation type="journal article" date="2005" name="J. Bacteriol.">
        <title>Insights on evolution of virulence and resistance from the complete genome analysis of an early methicillin-resistant Staphylococcus aureus strain and a biofilm-producing methicillin-resistant Staphylococcus epidermidis strain.</title>
        <authorList>
            <person name="Gill S.R."/>
            <person name="Fouts D.E."/>
            <person name="Archer G.L."/>
            <person name="Mongodin E.F."/>
            <person name="DeBoy R.T."/>
            <person name="Ravel J."/>
            <person name="Paulsen I.T."/>
            <person name="Kolonay J.F."/>
            <person name="Brinkac L.M."/>
            <person name="Beanan M.J."/>
            <person name="Dodson R.J."/>
            <person name="Daugherty S.C."/>
            <person name="Madupu R."/>
            <person name="Angiuoli S.V."/>
            <person name="Durkin A.S."/>
            <person name="Haft D.H."/>
            <person name="Vamathevan J.J."/>
            <person name="Khouri H."/>
            <person name="Utterback T.R."/>
            <person name="Lee C."/>
            <person name="Dimitrov G."/>
            <person name="Jiang L."/>
            <person name="Qin H."/>
            <person name="Weidman J."/>
            <person name="Tran K."/>
            <person name="Kang K.H."/>
            <person name="Hance I.R."/>
            <person name="Nelson K.E."/>
            <person name="Fraser C.M."/>
        </authorList>
    </citation>
    <scope>NUCLEOTIDE SEQUENCE [LARGE SCALE GENOMIC DNA]</scope>
    <source>
        <strain>ATCC 35984 / DSM 28319 / BCRC 17069 / CCUG 31568 / BM 3577 / RP62A</strain>
    </source>
</reference>
<evidence type="ECO:0000255" key="1">
    <source>
        <dbReference type="HAMAP-Rule" id="MF_00948"/>
    </source>
</evidence>
<feature type="chain" id="PRO_0000113955" description="Transcription termination/antitermination protein NusG">
    <location>
        <begin position="1"/>
        <end position="182"/>
    </location>
</feature>
<feature type="domain" description="KOW" evidence="1">
    <location>
        <begin position="131"/>
        <end position="163"/>
    </location>
</feature>
<dbReference type="EMBL" id="CP000029">
    <property type="protein sequence ID" value="AAW53567.1"/>
    <property type="molecule type" value="Genomic_DNA"/>
</dbReference>
<dbReference type="RefSeq" id="WP_001832303.1">
    <property type="nucleotide sequence ID" value="NC_002976.3"/>
</dbReference>
<dbReference type="SMR" id="Q5HRL6"/>
<dbReference type="STRING" id="176279.SERP0177"/>
<dbReference type="GeneID" id="50019535"/>
<dbReference type="KEGG" id="ser:SERP0177"/>
<dbReference type="eggNOG" id="COG0250">
    <property type="taxonomic scope" value="Bacteria"/>
</dbReference>
<dbReference type="HOGENOM" id="CLU_067287_1_1_9"/>
<dbReference type="Proteomes" id="UP000000531">
    <property type="component" value="Chromosome"/>
</dbReference>
<dbReference type="GO" id="GO:0005829">
    <property type="term" value="C:cytosol"/>
    <property type="evidence" value="ECO:0007669"/>
    <property type="project" value="TreeGrafter"/>
</dbReference>
<dbReference type="GO" id="GO:0006353">
    <property type="term" value="P:DNA-templated transcription termination"/>
    <property type="evidence" value="ECO:0007669"/>
    <property type="project" value="UniProtKB-UniRule"/>
</dbReference>
<dbReference type="GO" id="GO:0032784">
    <property type="term" value="P:regulation of DNA-templated transcription elongation"/>
    <property type="evidence" value="ECO:0007669"/>
    <property type="project" value="InterPro"/>
</dbReference>
<dbReference type="GO" id="GO:0031564">
    <property type="term" value="P:transcription antitermination"/>
    <property type="evidence" value="ECO:0007669"/>
    <property type="project" value="UniProtKB-UniRule"/>
</dbReference>
<dbReference type="GO" id="GO:0140673">
    <property type="term" value="P:transcription elongation-coupled chromatin remodeling"/>
    <property type="evidence" value="ECO:0007669"/>
    <property type="project" value="InterPro"/>
</dbReference>
<dbReference type="CDD" id="cd06091">
    <property type="entry name" value="KOW_NusG"/>
    <property type="match status" value="1"/>
</dbReference>
<dbReference type="CDD" id="cd09891">
    <property type="entry name" value="NGN_Bact_1"/>
    <property type="match status" value="1"/>
</dbReference>
<dbReference type="FunFam" id="2.30.30.30:FF:000002">
    <property type="entry name" value="Transcription termination/antitermination factor NusG"/>
    <property type="match status" value="1"/>
</dbReference>
<dbReference type="FunFam" id="3.30.70.940:FF:000002">
    <property type="entry name" value="Transcription termination/antitermination protein NusG"/>
    <property type="match status" value="1"/>
</dbReference>
<dbReference type="Gene3D" id="2.30.30.30">
    <property type="match status" value="1"/>
</dbReference>
<dbReference type="Gene3D" id="3.30.70.940">
    <property type="entry name" value="NusG, N-terminal domain"/>
    <property type="match status" value="1"/>
</dbReference>
<dbReference type="HAMAP" id="MF_00948">
    <property type="entry name" value="NusG"/>
    <property type="match status" value="1"/>
</dbReference>
<dbReference type="InterPro" id="IPR005824">
    <property type="entry name" value="KOW"/>
</dbReference>
<dbReference type="InterPro" id="IPR047050">
    <property type="entry name" value="NGN"/>
</dbReference>
<dbReference type="InterPro" id="IPR006645">
    <property type="entry name" value="NGN-like_dom"/>
</dbReference>
<dbReference type="InterPro" id="IPR036735">
    <property type="entry name" value="NGN_dom_sf"/>
</dbReference>
<dbReference type="InterPro" id="IPR043425">
    <property type="entry name" value="NusG-like"/>
</dbReference>
<dbReference type="InterPro" id="IPR014722">
    <property type="entry name" value="Rib_uL2_dom2"/>
</dbReference>
<dbReference type="InterPro" id="IPR001062">
    <property type="entry name" value="Transcrpt_antiterm_NusG"/>
</dbReference>
<dbReference type="InterPro" id="IPR015869">
    <property type="entry name" value="Transcrpt_antiterm_NusG_bac_CS"/>
</dbReference>
<dbReference type="InterPro" id="IPR008991">
    <property type="entry name" value="Translation_prot_SH3-like_sf"/>
</dbReference>
<dbReference type="NCBIfam" id="TIGR00922">
    <property type="entry name" value="nusG"/>
    <property type="match status" value="1"/>
</dbReference>
<dbReference type="PANTHER" id="PTHR30265">
    <property type="entry name" value="RHO-INTERACTING TRANSCRIPTION TERMINATION FACTOR NUSG"/>
    <property type="match status" value="1"/>
</dbReference>
<dbReference type="PANTHER" id="PTHR30265:SF2">
    <property type="entry name" value="TRANSCRIPTION TERMINATION_ANTITERMINATION PROTEIN NUSG"/>
    <property type="match status" value="1"/>
</dbReference>
<dbReference type="Pfam" id="PF00467">
    <property type="entry name" value="KOW"/>
    <property type="match status" value="1"/>
</dbReference>
<dbReference type="Pfam" id="PF02357">
    <property type="entry name" value="NusG"/>
    <property type="match status" value="1"/>
</dbReference>
<dbReference type="PRINTS" id="PR00338">
    <property type="entry name" value="NUSGTNSCPFCT"/>
</dbReference>
<dbReference type="SMART" id="SM00738">
    <property type="entry name" value="NGN"/>
    <property type="match status" value="1"/>
</dbReference>
<dbReference type="SUPFAM" id="SSF82679">
    <property type="entry name" value="N-utilization substance G protein NusG, N-terminal domain"/>
    <property type="match status" value="1"/>
</dbReference>
<dbReference type="SUPFAM" id="SSF50104">
    <property type="entry name" value="Translation proteins SH3-like domain"/>
    <property type="match status" value="1"/>
</dbReference>
<dbReference type="PROSITE" id="PS01014">
    <property type="entry name" value="NUSG"/>
    <property type="match status" value="1"/>
</dbReference>
<sequence>MSEEVGAKRWYAVHTYSGYENKVKKNLEKRVESMNMTEQIFRVVIPEEEETQVKDGKAKKLVKKTFPGYVLVELIMTDESWYVVRNTPGVTGFVGSAGAGSKPNPLLPEEVRFILKQMGLKEKTIDVELDVGEQVRIQSGPFANQIGEVQEIEADKFKLTVLVDMFGRETPVEVEFDQIEKL</sequence>
<name>NUSG_STAEQ</name>
<organism>
    <name type="scientific">Staphylococcus epidermidis (strain ATCC 35984 / DSM 28319 / BCRC 17069 / CCUG 31568 / BM 3577 / RP62A)</name>
    <dbReference type="NCBI Taxonomy" id="176279"/>
    <lineage>
        <taxon>Bacteria</taxon>
        <taxon>Bacillati</taxon>
        <taxon>Bacillota</taxon>
        <taxon>Bacilli</taxon>
        <taxon>Bacillales</taxon>
        <taxon>Staphylococcaceae</taxon>
        <taxon>Staphylococcus</taxon>
    </lineage>
</organism>
<proteinExistence type="inferred from homology"/>